<name>SSRP_VIBC1</name>
<protein>
    <recommendedName>
        <fullName evidence="1">SsrA-binding protein</fullName>
    </recommendedName>
    <alternativeName>
        <fullName evidence="1">Small protein B</fullName>
    </alternativeName>
</protein>
<sequence length="161" mass="18401">MVKKKSKQKAGSNTIALNKKARHEYFIDDEIEAGMELQGWEVKALRQGKANIAESYVFMRDGEAFVSGMTITPLNQASTHVVANPTRVRKLLMSRRELDNLLGRINREGMTLAALSLYWSRSWVKIKIGVAKGKKLHDKRTDLKEKDWAREKARVMKSSLR</sequence>
<keyword id="KW-0963">Cytoplasm</keyword>
<keyword id="KW-0694">RNA-binding</keyword>
<proteinExistence type="inferred from homology"/>
<accession>A7MWX4</accession>
<feature type="chain" id="PRO_1000002183" description="SsrA-binding protein">
    <location>
        <begin position="1"/>
        <end position="161"/>
    </location>
</feature>
<reference key="1">
    <citation type="submission" date="2007-08" db="EMBL/GenBank/DDBJ databases">
        <authorList>
            <consortium name="The Vibrio harveyi Genome Sequencing Project"/>
            <person name="Bassler B."/>
            <person name="Clifton S.W."/>
            <person name="Fulton L."/>
            <person name="Delehaunty K."/>
            <person name="Fronick C."/>
            <person name="Harrison M."/>
            <person name="Markivic C."/>
            <person name="Fulton R."/>
            <person name="Tin-Wollam A.-M."/>
            <person name="Shah N."/>
            <person name="Pepin K."/>
            <person name="Nash W."/>
            <person name="Thiruvilangam P."/>
            <person name="Bhonagiri V."/>
            <person name="Waters C."/>
            <person name="Tu K.C."/>
            <person name="Irgon J."/>
            <person name="Wilson R.K."/>
        </authorList>
    </citation>
    <scope>NUCLEOTIDE SEQUENCE [LARGE SCALE GENOMIC DNA]</scope>
    <source>
        <strain>ATCC BAA-1116 / BB120</strain>
    </source>
</reference>
<comment type="function">
    <text evidence="1">Required for rescue of stalled ribosomes mediated by trans-translation. Binds to transfer-messenger RNA (tmRNA), required for stable association of tmRNA with ribosomes. tmRNA and SmpB together mimic tRNA shape, replacing the anticodon stem-loop with SmpB. tmRNA is encoded by the ssrA gene; the 2 termini fold to resemble tRNA(Ala) and it encodes a 'tag peptide', a short internal open reading frame. During trans-translation Ala-aminoacylated tmRNA acts like a tRNA, entering the A-site of stalled ribosomes, displacing the stalled mRNA. The ribosome then switches to translate the ORF on the tmRNA; the nascent peptide is terminated with the 'tag peptide' encoded by the tmRNA and targeted for degradation. The ribosome is freed to recommence translation, which seems to be the essential function of trans-translation.</text>
</comment>
<comment type="subcellular location">
    <subcellularLocation>
        <location evidence="1">Cytoplasm</location>
    </subcellularLocation>
    <text evidence="1">The tmRNA-SmpB complex associates with stalled 70S ribosomes.</text>
</comment>
<comment type="similarity">
    <text evidence="1">Belongs to the SmpB family.</text>
</comment>
<organism>
    <name type="scientific">Vibrio campbellii (strain ATCC BAA-1116)</name>
    <dbReference type="NCBI Taxonomy" id="2902295"/>
    <lineage>
        <taxon>Bacteria</taxon>
        <taxon>Pseudomonadati</taxon>
        <taxon>Pseudomonadota</taxon>
        <taxon>Gammaproteobacteria</taxon>
        <taxon>Vibrionales</taxon>
        <taxon>Vibrionaceae</taxon>
        <taxon>Vibrio</taxon>
    </lineage>
</organism>
<evidence type="ECO:0000255" key="1">
    <source>
        <dbReference type="HAMAP-Rule" id="MF_00023"/>
    </source>
</evidence>
<gene>
    <name evidence="1" type="primary">smpB</name>
    <name type="ordered locus">VIBHAR_01124</name>
</gene>
<dbReference type="EMBL" id="CP000789">
    <property type="protein sequence ID" value="ABU70114.1"/>
    <property type="molecule type" value="Genomic_DNA"/>
</dbReference>
<dbReference type="RefSeq" id="WP_005424760.1">
    <property type="nucleotide sequence ID" value="NC_022269.1"/>
</dbReference>
<dbReference type="SMR" id="A7MWX4"/>
<dbReference type="GeneID" id="67378271"/>
<dbReference type="KEGG" id="vha:VIBHAR_01124"/>
<dbReference type="PATRIC" id="fig|338187.25.peg.1505"/>
<dbReference type="Proteomes" id="UP000008152">
    <property type="component" value="Chromosome I"/>
</dbReference>
<dbReference type="GO" id="GO:0005829">
    <property type="term" value="C:cytosol"/>
    <property type="evidence" value="ECO:0007669"/>
    <property type="project" value="TreeGrafter"/>
</dbReference>
<dbReference type="GO" id="GO:0003723">
    <property type="term" value="F:RNA binding"/>
    <property type="evidence" value="ECO:0007669"/>
    <property type="project" value="UniProtKB-UniRule"/>
</dbReference>
<dbReference type="GO" id="GO:0070929">
    <property type="term" value="P:trans-translation"/>
    <property type="evidence" value="ECO:0007669"/>
    <property type="project" value="UniProtKB-UniRule"/>
</dbReference>
<dbReference type="CDD" id="cd09294">
    <property type="entry name" value="SmpB"/>
    <property type="match status" value="1"/>
</dbReference>
<dbReference type="Gene3D" id="2.40.280.10">
    <property type="match status" value="1"/>
</dbReference>
<dbReference type="HAMAP" id="MF_00023">
    <property type="entry name" value="SmpB"/>
    <property type="match status" value="1"/>
</dbReference>
<dbReference type="InterPro" id="IPR023620">
    <property type="entry name" value="SmpB"/>
</dbReference>
<dbReference type="InterPro" id="IPR000037">
    <property type="entry name" value="SsrA-bd_prot"/>
</dbReference>
<dbReference type="InterPro" id="IPR020081">
    <property type="entry name" value="SsrA-bd_prot_CS"/>
</dbReference>
<dbReference type="NCBIfam" id="NF003843">
    <property type="entry name" value="PRK05422.1"/>
    <property type="match status" value="1"/>
</dbReference>
<dbReference type="NCBIfam" id="TIGR00086">
    <property type="entry name" value="smpB"/>
    <property type="match status" value="1"/>
</dbReference>
<dbReference type="PANTHER" id="PTHR30308:SF2">
    <property type="entry name" value="SSRA-BINDING PROTEIN"/>
    <property type="match status" value="1"/>
</dbReference>
<dbReference type="PANTHER" id="PTHR30308">
    <property type="entry name" value="TMRNA-BINDING COMPONENT OF TRANS-TRANSLATION TAGGING COMPLEX"/>
    <property type="match status" value="1"/>
</dbReference>
<dbReference type="Pfam" id="PF01668">
    <property type="entry name" value="SmpB"/>
    <property type="match status" value="1"/>
</dbReference>
<dbReference type="SUPFAM" id="SSF74982">
    <property type="entry name" value="Small protein B (SmpB)"/>
    <property type="match status" value="1"/>
</dbReference>
<dbReference type="PROSITE" id="PS01317">
    <property type="entry name" value="SSRP"/>
    <property type="match status" value="1"/>
</dbReference>